<reference key="1">
    <citation type="journal article" date="2005" name="Science">
        <title>The transcriptional landscape of the mammalian genome.</title>
        <authorList>
            <person name="Carninci P."/>
            <person name="Kasukawa T."/>
            <person name="Katayama S."/>
            <person name="Gough J."/>
            <person name="Frith M.C."/>
            <person name="Maeda N."/>
            <person name="Oyama R."/>
            <person name="Ravasi T."/>
            <person name="Lenhard B."/>
            <person name="Wells C."/>
            <person name="Kodzius R."/>
            <person name="Shimokawa K."/>
            <person name="Bajic V.B."/>
            <person name="Brenner S.E."/>
            <person name="Batalov S."/>
            <person name="Forrest A.R."/>
            <person name="Zavolan M."/>
            <person name="Davis M.J."/>
            <person name="Wilming L.G."/>
            <person name="Aidinis V."/>
            <person name="Allen J.E."/>
            <person name="Ambesi-Impiombato A."/>
            <person name="Apweiler R."/>
            <person name="Aturaliya R.N."/>
            <person name="Bailey T.L."/>
            <person name="Bansal M."/>
            <person name="Baxter L."/>
            <person name="Beisel K.W."/>
            <person name="Bersano T."/>
            <person name="Bono H."/>
            <person name="Chalk A.M."/>
            <person name="Chiu K.P."/>
            <person name="Choudhary V."/>
            <person name="Christoffels A."/>
            <person name="Clutterbuck D.R."/>
            <person name="Crowe M.L."/>
            <person name="Dalla E."/>
            <person name="Dalrymple B.P."/>
            <person name="de Bono B."/>
            <person name="Della Gatta G."/>
            <person name="di Bernardo D."/>
            <person name="Down T."/>
            <person name="Engstrom P."/>
            <person name="Fagiolini M."/>
            <person name="Faulkner G."/>
            <person name="Fletcher C.F."/>
            <person name="Fukushima T."/>
            <person name="Furuno M."/>
            <person name="Futaki S."/>
            <person name="Gariboldi M."/>
            <person name="Georgii-Hemming P."/>
            <person name="Gingeras T.R."/>
            <person name="Gojobori T."/>
            <person name="Green R.E."/>
            <person name="Gustincich S."/>
            <person name="Harbers M."/>
            <person name="Hayashi Y."/>
            <person name="Hensch T.K."/>
            <person name="Hirokawa N."/>
            <person name="Hill D."/>
            <person name="Huminiecki L."/>
            <person name="Iacono M."/>
            <person name="Ikeo K."/>
            <person name="Iwama A."/>
            <person name="Ishikawa T."/>
            <person name="Jakt M."/>
            <person name="Kanapin A."/>
            <person name="Katoh M."/>
            <person name="Kawasawa Y."/>
            <person name="Kelso J."/>
            <person name="Kitamura H."/>
            <person name="Kitano H."/>
            <person name="Kollias G."/>
            <person name="Krishnan S.P."/>
            <person name="Kruger A."/>
            <person name="Kummerfeld S.K."/>
            <person name="Kurochkin I.V."/>
            <person name="Lareau L.F."/>
            <person name="Lazarevic D."/>
            <person name="Lipovich L."/>
            <person name="Liu J."/>
            <person name="Liuni S."/>
            <person name="McWilliam S."/>
            <person name="Madan Babu M."/>
            <person name="Madera M."/>
            <person name="Marchionni L."/>
            <person name="Matsuda H."/>
            <person name="Matsuzawa S."/>
            <person name="Miki H."/>
            <person name="Mignone F."/>
            <person name="Miyake S."/>
            <person name="Morris K."/>
            <person name="Mottagui-Tabar S."/>
            <person name="Mulder N."/>
            <person name="Nakano N."/>
            <person name="Nakauchi H."/>
            <person name="Ng P."/>
            <person name="Nilsson R."/>
            <person name="Nishiguchi S."/>
            <person name="Nishikawa S."/>
            <person name="Nori F."/>
            <person name="Ohara O."/>
            <person name="Okazaki Y."/>
            <person name="Orlando V."/>
            <person name="Pang K.C."/>
            <person name="Pavan W.J."/>
            <person name="Pavesi G."/>
            <person name="Pesole G."/>
            <person name="Petrovsky N."/>
            <person name="Piazza S."/>
            <person name="Reed J."/>
            <person name="Reid J.F."/>
            <person name="Ring B.Z."/>
            <person name="Ringwald M."/>
            <person name="Rost B."/>
            <person name="Ruan Y."/>
            <person name="Salzberg S.L."/>
            <person name="Sandelin A."/>
            <person name="Schneider C."/>
            <person name="Schoenbach C."/>
            <person name="Sekiguchi K."/>
            <person name="Semple C.A."/>
            <person name="Seno S."/>
            <person name="Sessa L."/>
            <person name="Sheng Y."/>
            <person name="Shibata Y."/>
            <person name="Shimada H."/>
            <person name="Shimada K."/>
            <person name="Silva D."/>
            <person name="Sinclair B."/>
            <person name="Sperling S."/>
            <person name="Stupka E."/>
            <person name="Sugiura K."/>
            <person name="Sultana R."/>
            <person name="Takenaka Y."/>
            <person name="Taki K."/>
            <person name="Tammoja K."/>
            <person name="Tan S.L."/>
            <person name="Tang S."/>
            <person name="Taylor M.S."/>
            <person name="Tegner J."/>
            <person name="Teichmann S.A."/>
            <person name="Ueda H.R."/>
            <person name="van Nimwegen E."/>
            <person name="Verardo R."/>
            <person name="Wei C.L."/>
            <person name="Yagi K."/>
            <person name="Yamanishi H."/>
            <person name="Zabarovsky E."/>
            <person name="Zhu S."/>
            <person name="Zimmer A."/>
            <person name="Hide W."/>
            <person name="Bult C."/>
            <person name="Grimmond S.M."/>
            <person name="Teasdale R.D."/>
            <person name="Liu E.T."/>
            <person name="Brusic V."/>
            <person name="Quackenbush J."/>
            <person name="Wahlestedt C."/>
            <person name="Mattick J.S."/>
            <person name="Hume D.A."/>
            <person name="Kai C."/>
            <person name="Sasaki D."/>
            <person name="Tomaru Y."/>
            <person name="Fukuda S."/>
            <person name="Kanamori-Katayama M."/>
            <person name="Suzuki M."/>
            <person name="Aoki J."/>
            <person name="Arakawa T."/>
            <person name="Iida J."/>
            <person name="Imamura K."/>
            <person name="Itoh M."/>
            <person name="Kato T."/>
            <person name="Kawaji H."/>
            <person name="Kawagashira N."/>
            <person name="Kawashima T."/>
            <person name="Kojima M."/>
            <person name="Kondo S."/>
            <person name="Konno H."/>
            <person name="Nakano K."/>
            <person name="Ninomiya N."/>
            <person name="Nishio T."/>
            <person name="Okada M."/>
            <person name="Plessy C."/>
            <person name="Shibata K."/>
            <person name="Shiraki T."/>
            <person name="Suzuki S."/>
            <person name="Tagami M."/>
            <person name="Waki K."/>
            <person name="Watahiki A."/>
            <person name="Okamura-Oho Y."/>
            <person name="Suzuki H."/>
            <person name="Kawai J."/>
            <person name="Hayashizaki Y."/>
        </authorList>
    </citation>
    <scope>NUCLEOTIDE SEQUENCE [LARGE SCALE MRNA]</scope>
    <source>
        <strain>C57BL/6J</strain>
        <tissue>Pancreas</tissue>
    </source>
</reference>
<reference key="2">
    <citation type="journal article" date="2010" name="Cell">
        <title>A tissue-specific atlas of mouse protein phosphorylation and expression.</title>
        <authorList>
            <person name="Huttlin E.L."/>
            <person name="Jedrychowski M.P."/>
            <person name="Elias J.E."/>
            <person name="Goswami T."/>
            <person name="Rad R."/>
            <person name="Beausoleil S.A."/>
            <person name="Villen J."/>
            <person name="Haas W."/>
            <person name="Sowa M.E."/>
            <person name="Gygi S.P."/>
        </authorList>
    </citation>
    <scope>IDENTIFICATION BY MASS SPECTROMETRY [LARGE SCALE ANALYSIS]</scope>
    <source>
        <tissue>Testis</tissue>
    </source>
</reference>
<reference key="3">
    <citation type="journal article" date="2011" name="Acta Biochim. Biophys. Sin.">
        <title>Lyzl4, a novel mouse sperm-related protein, is involved in fertilization.</title>
        <authorList>
            <person name="Sun R."/>
            <person name="Shen R."/>
            <person name="Li J."/>
            <person name="Xu G."/>
            <person name="Chi J."/>
            <person name="Li L."/>
            <person name="Ren J."/>
            <person name="Wang Z."/>
            <person name="Fei J."/>
        </authorList>
    </citation>
    <scope>FUNCTION</scope>
    <scope>TISSUE SPECIFICITY</scope>
    <scope>DEVELOPMENTAL STAGE</scope>
    <scope>SUBCELLULAR LOCATION</scope>
    <scope>ABSENCE OF BACTERIOLYTIC ACTIVITY</scope>
</reference>
<reference key="4">
    <citation type="journal article" date="2013" name="Asian J. Androl.">
        <title>Characterisation of Lyzls in mice and antibacterial properties of human LYZL6.</title>
        <authorList>
            <person name="Wei J."/>
            <person name="Li S.J."/>
            <person name="Shi H."/>
            <person name="Wang H.Y."/>
            <person name="Rong C.T."/>
            <person name="Zhu P."/>
            <person name="Jin S.H."/>
            <person name="Liu J."/>
            <person name="Li J.Y."/>
        </authorList>
    </citation>
    <scope>TISSUE SPECIFICITY</scope>
    <scope>DEVELOPMENTAL STAGE</scope>
</reference>
<comment type="function">
    <text evidence="1 4">May be involved in fertilization (PubMed:21444326). Has no detectable bacteriolytic in vitro (PubMed:21444326). Has no lysozyme activity in vitro (By similarity).</text>
</comment>
<comment type="subunit">
    <text evidence="6">Monomer.</text>
</comment>
<comment type="subcellular location">
    <subcellularLocation>
        <location evidence="4">Secreted</location>
    </subcellularLocation>
    <subcellularLocation>
        <location evidence="4">Cytoplasmic vesicle</location>
        <location evidence="4">Secretory vesicle</location>
        <location evidence="4">Acrosome</location>
    </subcellularLocation>
    <subcellularLocation>
        <location evidence="4">Cell projection</location>
        <location evidence="4">Cilium</location>
        <location evidence="4">Flagellum</location>
    </subcellularLocation>
    <text evidence="4">Found in the principal piece of sperm tail (PubMed:21444326).</text>
</comment>
<comment type="tissue specificity">
    <text evidence="4 5">Expressed strongly in testis and in epididymis, and weakly in brain and lung (PubMed:21444326, PubMed:24013621). Detected in sperm (at protein level) (PubMed:21444326).</text>
</comment>
<comment type="developmental stage">
    <text evidence="4 5">No expression in the testis of 2-weeks-old neonates, the expression reaches a peak level at 12 weeks. After that, the level gradually decreases as the age increases (PubMed:21444326, PubMed:24013621).</text>
</comment>
<comment type="similarity">
    <text evidence="3">Belongs to the glycosyl hydrolase 22 family.</text>
</comment>
<comment type="caution">
    <text evidence="6">Although it belongs to the glycosyl hydrolase 22 family, Gly-72 is present instead of the conserved Asp which is an active site residue. It is therefore expected that this protein lacks hydrolase activity.</text>
</comment>
<comment type="sequence caution" evidence="6">
    <conflict type="erroneous initiation">
        <sequence resource="EMBL-CDS" id="BAB25023"/>
    </conflict>
</comment>
<name>LYZL4_MOUSE</name>
<gene>
    <name type="primary">Lyzl4</name>
    <name type="synonym">Lyc4</name>
</gene>
<dbReference type="EMBL" id="AK007412">
    <property type="protein sequence ID" value="BAB25023.2"/>
    <property type="status" value="ALT_INIT"/>
    <property type="molecule type" value="mRNA"/>
</dbReference>
<dbReference type="CCDS" id="CCDS23632.1"/>
<dbReference type="RefSeq" id="NP_001344275.2">
    <property type="nucleotide sequence ID" value="NM_001357346.2"/>
</dbReference>
<dbReference type="RefSeq" id="NP_001369764.1">
    <property type="nucleotide sequence ID" value="NM_001382835.1"/>
</dbReference>
<dbReference type="RefSeq" id="NP_081191.1">
    <property type="nucleotide sequence ID" value="NM_026915.4"/>
</dbReference>
<dbReference type="RefSeq" id="XP_006512311.1">
    <property type="nucleotide sequence ID" value="XM_006512248.2"/>
</dbReference>
<dbReference type="SMR" id="Q9D925"/>
<dbReference type="FunCoup" id="Q9D925">
    <property type="interactions" value="9"/>
</dbReference>
<dbReference type="STRING" id="10090.ENSMUSP00000076887"/>
<dbReference type="CAZy" id="GH22">
    <property type="family name" value="Glycoside Hydrolase Family 22"/>
</dbReference>
<dbReference type="PhosphoSitePlus" id="Q9D925"/>
<dbReference type="PaxDb" id="10090-ENSMUSP00000076887"/>
<dbReference type="ProteomicsDB" id="292157"/>
<dbReference type="Antibodypedia" id="29191">
    <property type="antibodies" value="91 antibodies from 19 providers"/>
</dbReference>
<dbReference type="DNASU" id="69032"/>
<dbReference type="Ensembl" id="ENSMUST00000077706.10">
    <property type="protein sequence ID" value="ENSMUSP00000076887.4"/>
    <property type="gene ID" value="ENSMUSG00000032530.15"/>
</dbReference>
<dbReference type="Ensembl" id="ENSMUST00000120918.8">
    <property type="protein sequence ID" value="ENSMUSP00000113034.2"/>
    <property type="gene ID" value="ENSMUSG00000032530.15"/>
</dbReference>
<dbReference type="GeneID" id="69032"/>
<dbReference type="KEGG" id="mmu:69032"/>
<dbReference type="UCSC" id="uc009sdi.1">
    <property type="organism name" value="mouse"/>
</dbReference>
<dbReference type="AGR" id="MGI:1916282"/>
<dbReference type="CTD" id="131375"/>
<dbReference type="MGI" id="MGI:1916282">
    <property type="gene designation" value="Lyzl4"/>
</dbReference>
<dbReference type="VEuPathDB" id="HostDB:ENSMUSG00000032530"/>
<dbReference type="eggNOG" id="ENOG502SSER">
    <property type="taxonomic scope" value="Eukaryota"/>
</dbReference>
<dbReference type="GeneTree" id="ENSGT00940000162293"/>
<dbReference type="HOGENOM" id="CLU_111620_1_1_1"/>
<dbReference type="InParanoid" id="Q9D925"/>
<dbReference type="OMA" id="AWPSWSL"/>
<dbReference type="OrthoDB" id="17373at2759"/>
<dbReference type="PhylomeDB" id="Q9D925"/>
<dbReference type="TreeFam" id="TF324882"/>
<dbReference type="BioGRID-ORCS" id="69032">
    <property type="hits" value="0 hits in 76 CRISPR screens"/>
</dbReference>
<dbReference type="ChiTaRS" id="Lyzl4">
    <property type="organism name" value="mouse"/>
</dbReference>
<dbReference type="PRO" id="PR:Q9D925"/>
<dbReference type="Proteomes" id="UP000000589">
    <property type="component" value="Chromosome 9"/>
</dbReference>
<dbReference type="RNAct" id="Q9D925">
    <property type="molecule type" value="protein"/>
</dbReference>
<dbReference type="Bgee" id="ENSMUSG00000032530">
    <property type="expression patterns" value="Expressed in spermatid and 38 other cell types or tissues"/>
</dbReference>
<dbReference type="ExpressionAtlas" id="Q9D925">
    <property type="expression patterns" value="baseline and differential"/>
</dbReference>
<dbReference type="GO" id="GO:0001669">
    <property type="term" value="C:acrosomal vesicle"/>
    <property type="evidence" value="ECO:0000314"/>
    <property type="project" value="UniProtKB"/>
</dbReference>
<dbReference type="GO" id="GO:0005615">
    <property type="term" value="C:extracellular space"/>
    <property type="evidence" value="ECO:0000314"/>
    <property type="project" value="UniProtKB"/>
</dbReference>
<dbReference type="GO" id="GO:0036126">
    <property type="term" value="C:sperm flagellum"/>
    <property type="evidence" value="ECO:0000314"/>
    <property type="project" value="UniProtKB"/>
</dbReference>
<dbReference type="GO" id="GO:0003796">
    <property type="term" value="F:lysozyme activity"/>
    <property type="evidence" value="ECO:0007669"/>
    <property type="project" value="InterPro"/>
</dbReference>
<dbReference type="GO" id="GO:0009566">
    <property type="term" value="P:fertilization"/>
    <property type="evidence" value="ECO:0000315"/>
    <property type="project" value="UniProtKB"/>
</dbReference>
<dbReference type="GO" id="GO:0007338">
    <property type="term" value="P:single fertilization"/>
    <property type="evidence" value="ECO:0007669"/>
    <property type="project" value="UniProtKB-KW"/>
</dbReference>
<dbReference type="CDD" id="cd16897">
    <property type="entry name" value="LYZ_C"/>
    <property type="match status" value="1"/>
</dbReference>
<dbReference type="FunFam" id="1.10.530.10:FF:000001">
    <property type="entry name" value="Lysozyme C"/>
    <property type="match status" value="1"/>
</dbReference>
<dbReference type="Gene3D" id="1.10.530.10">
    <property type="match status" value="1"/>
</dbReference>
<dbReference type="InterPro" id="IPR001916">
    <property type="entry name" value="Glyco_hydro_22"/>
</dbReference>
<dbReference type="InterPro" id="IPR019799">
    <property type="entry name" value="Glyco_hydro_22_CS"/>
</dbReference>
<dbReference type="InterPro" id="IPR000974">
    <property type="entry name" value="Glyco_hydro_22_lys"/>
</dbReference>
<dbReference type="InterPro" id="IPR023346">
    <property type="entry name" value="Lysozyme-like_dom_sf"/>
</dbReference>
<dbReference type="PANTHER" id="PTHR11407">
    <property type="entry name" value="LYSOZYME C"/>
    <property type="match status" value="1"/>
</dbReference>
<dbReference type="PANTHER" id="PTHR11407:SF21">
    <property type="entry name" value="LYSOZYME-LIKE PROTEIN 4"/>
    <property type="match status" value="1"/>
</dbReference>
<dbReference type="Pfam" id="PF00062">
    <property type="entry name" value="Lys"/>
    <property type="match status" value="1"/>
</dbReference>
<dbReference type="PRINTS" id="PR00137">
    <property type="entry name" value="LYSOZYME"/>
</dbReference>
<dbReference type="PRINTS" id="PR00135">
    <property type="entry name" value="LYZLACT"/>
</dbReference>
<dbReference type="SMART" id="SM00263">
    <property type="entry name" value="LYZ1"/>
    <property type="match status" value="1"/>
</dbReference>
<dbReference type="SUPFAM" id="SSF53955">
    <property type="entry name" value="Lysozyme-like"/>
    <property type="match status" value="1"/>
</dbReference>
<dbReference type="PROSITE" id="PS00128">
    <property type="entry name" value="GLYCOSYL_HYDROL_F22_1"/>
    <property type="match status" value="1"/>
</dbReference>
<dbReference type="PROSITE" id="PS51348">
    <property type="entry name" value="GLYCOSYL_HYDROL_F22_2"/>
    <property type="match status" value="1"/>
</dbReference>
<organism>
    <name type="scientific">Mus musculus</name>
    <name type="common">Mouse</name>
    <dbReference type="NCBI Taxonomy" id="10090"/>
    <lineage>
        <taxon>Eukaryota</taxon>
        <taxon>Metazoa</taxon>
        <taxon>Chordata</taxon>
        <taxon>Craniata</taxon>
        <taxon>Vertebrata</taxon>
        <taxon>Euteleostomi</taxon>
        <taxon>Mammalia</taxon>
        <taxon>Eutheria</taxon>
        <taxon>Euarchontoglires</taxon>
        <taxon>Glires</taxon>
        <taxon>Rodentia</taxon>
        <taxon>Myomorpha</taxon>
        <taxon>Muroidea</taxon>
        <taxon>Muridae</taxon>
        <taxon>Murinae</taxon>
        <taxon>Mus</taxon>
        <taxon>Mus</taxon>
    </lineage>
</organism>
<evidence type="ECO:0000250" key="1">
    <source>
        <dbReference type="UniProtKB" id="D4ABW7"/>
    </source>
</evidence>
<evidence type="ECO:0000255" key="2"/>
<evidence type="ECO:0000255" key="3">
    <source>
        <dbReference type="PROSITE-ProRule" id="PRU00680"/>
    </source>
</evidence>
<evidence type="ECO:0000269" key="4">
    <source>
    </source>
</evidence>
<evidence type="ECO:0000269" key="5">
    <source>
    </source>
</evidence>
<evidence type="ECO:0000305" key="6"/>
<sequence>MQLYLVLLLISYLLTPIGASILGRCTVAKMLYDGGLNYFEGYSLENWVCLAYFESKFNPSAVYEDPQDGSTGFGLFQIRDNEWCGHGKNLCSVSCTALLNPNLKDTIQCAKKIVKGKHGMGAWPIWSKNCQLSDVLDRWLDGCDL</sequence>
<accession>Q9D925</accession>
<keyword id="KW-0966">Cell projection</keyword>
<keyword id="KW-0969">Cilium</keyword>
<keyword id="KW-0968">Cytoplasmic vesicle</keyword>
<keyword id="KW-1015">Disulfide bond</keyword>
<keyword id="KW-0278">Fertilization</keyword>
<keyword id="KW-0282">Flagellum</keyword>
<keyword id="KW-1185">Reference proteome</keyword>
<keyword id="KW-0964">Secreted</keyword>
<keyword id="KW-0732">Signal</keyword>
<feature type="signal peptide" evidence="2">
    <location>
        <begin position="1"/>
        <end position="19"/>
    </location>
</feature>
<feature type="chain" id="PRO_0000240639" description="Lysozyme-like protein 4">
    <location>
        <begin position="20"/>
        <end position="145"/>
    </location>
</feature>
<feature type="domain" description="C-type lysozyme" evidence="3">
    <location>
        <begin position="20"/>
        <end position="145"/>
    </location>
</feature>
<feature type="active site" evidence="3">
    <location>
        <position position="54"/>
    </location>
</feature>
<feature type="disulfide bond" evidence="3">
    <location>
        <begin position="25"/>
        <end position="143"/>
    </location>
</feature>
<feature type="disulfide bond" evidence="3">
    <location>
        <begin position="49"/>
        <end position="130"/>
    </location>
</feature>
<feature type="disulfide bond" evidence="3">
    <location>
        <begin position="84"/>
        <end position="95"/>
    </location>
</feature>
<feature type="disulfide bond" evidence="3">
    <location>
        <begin position="91"/>
        <end position="109"/>
    </location>
</feature>
<proteinExistence type="evidence at protein level"/>
<protein>
    <recommendedName>
        <fullName>Lysozyme-like protein 4</fullName>
        <shortName>Lysozyme-4</shortName>
    </recommendedName>
</protein>